<dbReference type="EC" id="2.7.2.8" evidence="1"/>
<dbReference type="EMBL" id="AF093219">
    <property type="protein sequence ID" value="AAF21804.1"/>
    <property type="status" value="ALT_INIT"/>
    <property type="molecule type" value="Genomic_DNA"/>
</dbReference>
<dbReference type="EMBL" id="AL111168">
    <property type="protein sequence ID" value="CAL34381.1"/>
    <property type="status" value="ALT_INIT"/>
    <property type="molecule type" value="Genomic_DNA"/>
</dbReference>
<dbReference type="PIR" id="B81440">
    <property type="entry name" value="B81440"/>
</dbReference>
<dbReference type="RefSeq" id="YP_002343669.1">
    <property type="nucleotide sequence ID" value="NC_002163.1"/>
</dbReference>
<dbReference type="SMR" id="Q9PIR8"/>
<dbReference type="STRING" id="192222.Cj0226"/>
<dbReference type="PaxDb" id="192222-Cj0226"/>
<dbReference type="EnsemblBacteria" id="CAL34381">
    <property type="protein sequence ID" value="CAL34381"/>
    <property type="gene ID" value="Cj0226"/>
</dbReference>
<dbReference type="GeneID" id="904554"/>
<dbReference type="KEGG" id="cje:Cj0226"/>
<dbReference type="PATRIC" id="fig|192222.6.peg.220"/>
<dbReference type="eggNOG" id="COG0548">
    <property type="taxonomic scope" value="Bacteria"/>
</dbReference>
<dbReference type="HOGENOM" id="CLU_053680_0_0_7"/>
<dbReference type="OrthoDB" id="9803155at2"/>
<dbReference type="UniPathway" id="UPA00068">
    <property type="reaction ID" value="UER00107"/>
</dbReference>
<dbReference type="Proteomes" id="UP000000799">
    <property type="component" value="Chromosome"/>
</dbReference>
<dbReference type="GO" id="GO:0005737">
    <property type="term" value="C:cytoplasm"/>
    <property type="evidence" value="ECO:0007669"/>
    <property type="project" value="UniProtKB-SubCell"/>
</dbReference>
<dbReference type="GO" id="GO:0003991">
    <property type="term" value="F:acetylglutamate kinase activity"/>
    <property type="evidence" value="ECO:0007669"/>
    <property type="project" value="UniProtKB-UniRule"/>
</dbReference>
<dbReference type="GO" id="GO:0005524">
    <property type="term" value="F:ATP binding"/>
    <property type="evidence" value="ECO:0007669"/>
    <property type="project" value="UniProtKB-UniRule"/>
</dbReference>
<dbReference type="GO" id="GO:0042450">
    <property type="term" value="P:arginine biosynthetic process via ornithine"/>
    <property type="evidence" value="ECO:0007669"/>
    <property type="project" value="UniProtKB-UniRule"/>
</dbReference>
<dbReference type="GO" id="GO:0006526">
    <property type="term" value="P:L-arginine biosynthetic process"/>
    <property type="evidence" value="ECO:0007669"/>
    <property type="project" value="UniProtKB-UniPathway"/>
</dbReference>
<dbReference type="CDD" id="cd04250">
    <property type="entry name" value="AAK_NAGK-C"/>
    <property type="match status" value="1"/>
</dbReference>
<dbReference type="FunFam" id="3.40.1160.10:FF:000004">
    <property type="entry name" value="Acetylglutamate kinase"/>
    <property type="match status" value="1"/>
</dbReference>
<dbReference type="Gene3D" id="3.40.1160.10">
    <property type="entry name" value="Acetylglutamate kinase-like"/>
    <property type="match status" value="1"/>
</dbReference>
<dbReference type="HAMAP" id="MF_00082">
    <property type="entry name" value="ArgB"/>
    <property type="match status" value="1"/>
</dbReference>
<dbReference type="InterPro" id="IPR036393">
    <property type="entry name" value="AceGlu_kinase-like_sf"/>
</dbReference>
<dbReference type="InterPro" id="IPR004662">
    <property type="entry name" value="AcgluKinase_fam"/>
</dbReference>
<dbReference type="InterPro" id="IPR037528">
    <property type="entry name" value="ArgB"/>
</dbReference>
<dbReference type="InterPro" id="IPR001048">
    <property type="entry name" value="Asp/Glu/Uridylate_kinase"/>
</dbReference>
<dbReference type="InterPro" id="IPR001057">
    <property type="entry name" value="Glu/AcGlu_kinase"/>
</dbReference>
<dbReference type="InterPro" id="IPR041727">
    <property type="entry name" value="NAGK-C"/>
</dbReference>
<dbReference type="NCBIfam" id="TIGR00761">
    <property type="entry name" value="argB"/>
    <property type="match status" value="1"/>
</dbReference>
<dbReference type="PANTHER" id="PTHR23342">
    <property type="entry name" value="N-ACETYLGLUTAMATE SYNTHASE"/>
    <property type="match status" value="1"/>
</dbReference>
<dbReference type="PANTHER" id="PTHR23342:SF0">
    <property type="entry name" value="N-ACETYLGLUTAMATE SYNTHASE, MITOCHONDRIAL"/>
    <property type="match status" value="1"/>
</dbReference>
<dbReference type="Pfam" id="PF00696">
    <property type="entry name" value="AA_kinase"/>
    <property type="match status" value="1"/>
</dbReference>
<dbReference type="PIRSF" id="PIRSF000728">
    <property type="entry name" value="NAGK"/>
    <property type="match status" value="1"/>
</dbReference>
<dbReference type="PRINTS" id="PR00474">
    <property type="entry name" value="GLU5KINASE"/>
</dbReference>
<dbReference type="SUPFAM" id="SSF53633">
    <property type="entry name" value="Carbamate kinase-like"/>
    <property type="match status" value="1"/>
</dbReference>
<accession>Q9PIR8</accession>
<accession>Q0PBS8</accession>
<accession>Q9RGZ8</accession>
<organism>
    <name type="scientific">Campylobacter jejuni subsp. jejuni serotype O:2 (strain ATCC 700819 / NCTC 11168)</name>
    <dbReference type="NCBI Taxonomy" id="192222"/>
    <lineage>
        <taxon>Bacteria</taxon>
        <taxon>Pseudomonadati</taxon>
        <taxon>Campylobacterota</taxon>
        <taxon>Epsilonproteobacteria</taxon>
        <taxon>Campylobacterales</taxon>
        <taxon>Campylobacteraceae</taxon>
        <taxon>Campylobacter</taxon>
    </lineage>
</organism>
<proteinExistence type="inferred from homology"/>
<name>ARGB_CAMJE</name>
<reference key="1">
    <citation type="journal article" date="1999" name="Can. J. Microbiol.">
        <title>Arginine biosynthesis in Campylobacter jejuni TGH9011: determination of the argCOBD cluster.</title>
        <authorList>
            <person name="Hani E.K."/>
            <person name="Ng D."/>
            <person name="Chan V.-L."/>
        </authorList>
    </citation>
    <scope>NUCLEOTIDE SEQUENCE [GENOMIC DNA]</scope>
    <source>
        <strain>ATCC 43431 / TGH 9011 / Serotype O:3</strain>
    </source>
</reference>
<reference key="2">
    <citation type="journal article" date="2000" name="Nature">
        <title>The genome sequence of the food-borne pathogen Campylobacter jejuni reveals hypervariable sequences.</title>
        <authorList>
            <person name="Parkhill J."/>
            <person name="Wren B.W."/>
            <person name="Mungall K.L."/>
            <person name="Ketley J.M."/>
            <person name="Churcher C.M."/>
            <person name="Basham D."/>
            <person name="Chillingworth T."/>
            <person name="Davies R.M."/>
            <person name="Feltwell T."/>
            <person name="Holroyd S."/>
            <person name="Jagels K."/>
            <person name="Karlyshev A.V."/>
            <person name="Moule S."/>
            <person name="Pallen M.J."/>
            <person name="Penn C.W."/>
            <person name="Quail M.A."/>
            <person name="Rajandream M.A."/>
            <person name="Rutherford K.M."/>
            <person name="van Vliet A.H.M."/>
            <person name="Whitehead S."/>
            <person name="Barrell B.G."/>
        </authorList>
    </citation>
    <scope>NUCLEOTIDE SEQUENCE [LARGE SCALE GENOMIC DNA]</scope>
    <source>
        <strain>ATCC 700819 / NCTC 11168</strain>
    </source>
</reference>
<comment type="function">
    <text evidence="1">Catalyzes the ATP-dependent phosphorylation of N-acetyl-L-glutamate.</text>
</comment>
<comment type="catalytic activity">
    <reaction evidence="1">
        <text>N-acetyl-L-glutamate + ATP = N-acetyl-L-glutamyl 5-phosphate + ADP</text>
        <dbReference type="Rhea" id="RHEA:14629"/>
        <dbReference type="ChEBI" id="CHEBI:30616"/>
        <dbReference type="ChEBI" id="CHEBI:44337"/>
        <dbReference type="ChEBI" id="CHEBI:57936"/>
        <dbReference type="ChEBI" id="CHEBI:456216"/>
        <dbReference type="EC" id="2.7.2.8"/>
    </reaction>
</comment>
<comment type="pathway">
    <text evidence="1">Amino-acid biosynthesis; L-arginine biosynthesis; N(2)-acetyl-L-ornithine from L-glutamate: step 2/4.</text>
</comment>
<comment type="subcellular location">
    <subcellularLocation>
        <location evidence="1">Cytoplasm</location>
    </subcellularLocation>
</comment>
<comment type="similarity">
    <text evidence="1">Belongs to the acetylglutamate kinase family. ArgB subfamily.</text>
</comment>
<comment type="sequence caution" evidence="2">
    <conflict type="erroneous initiation">
        <sequence resource="EMBL-CDS" id="AAF21804"/>
    </conflict>
</comment>
<comment type="sequence caution" evidence="2">
    <conflict type="erroneous initiation">
        <sequence resource="EMBL-CDS" id="CAL34381"/>
    </conflict>
</comment>
<protein>
    <recommendedName>
        <fullName evidence="1">Acetylglutamate kinase</fullName>
        <ecNumber evidence="1">2.7.2.8</ecNumber>
    </recommendedName>
    <alternativeName>
        <fullName evidence="1">N-acetyl-L-glutamate 5-phosphotransferase</fullName>
    </alternativeName>
    <alternativeName>
        <fullName evidence="1">NAG kinase</fullName>
        <shortName evidence="1">NAGK</shortName>
    </alternativeName>
</protein>
<sequence length="279" mass="30519">MQKYLEKANVLIEALPYIRKFNSKIILIKYGGSAMENEELKHCVMQDIALLKLVGLKPIIVHGGGKDISAMCEKLGVKSEFKNGLRVSDKATIEVASMVLNHINKNLVHSLQNLGVKAIGLCGKDGALLECVKKDENLAFVGTIQKVNSKILEELLEKDFLPIIAPIGMDENFNTYNINADDAACAIAKALRAEKLAFLTDTAGLYEDFNDKNSLISKISLEQAKILAPKIEGGMHVKLKSCIDACENGVKKVHILDGRVKHSLLLEFFTDEGIGTLVG</sequence>
<evidence type="ECO:0000255" key="1">
    <source>
        <dbReference type="HAMAP-Rule" id="MF_00082"/>
    </source>
</evidence>
<evidence type="ECO:0000305" key="2"/>
<gene>
    <name evidence="1" type="primary">argB</name>
    <name type="ordered locus">Cj0226</name>
</gene>
<feature type="chain" id="PRO_0000112602" description="Acetylglutamate kinase">
    <location>
        <begin position="1"/>
        <end position="279"/>
    </location>
</feature>
<feature type="binding site" evidence="1">
    <location>
        <begin position="64"/>
        <end position="65"/>
    </location>
    <ligand>
        <name>substrate</name>
    </ligand>
</feature>
<feature type="binding site" evidence="1">
    <location>
        <position position="86"/>
    </location>
    <ligand>
        <name>substrate</name>
    </ligand>
</feature>
<feature type="binding site" evidence="1">
    <location>
        <position position="177"/>
    </location>
    <ligand>
        <name>substrate</name>
    </ligand>
</feature>
<feature type="site" description="Transition state stabilizer" evidence="1">
    <location>
        <position position="29"/>
    </location>
</feature>
<feature type="site" description="Transition state stabilizer" evidence="1">
    <location>
        <position position="238"/>
    </location>
</feature>
<feature type="sequence conflict" description="In Ref. 1; AAF21804." evidence="2" ref="1">
    <original>H</original>
    <variation>R</variation>
    <location>
        <position position="62"/>
    </location>
</feature>
<feature type="sequence conflict" description="In Ref. 1; AAF21804." evidence="2" ref="1">
    <original>EKLG</original>
    <variation>ARLF</variation>
    <location>
        <begin position="73"/>
        <end position="76"/>
    </location>
</feature>
<feature type="sequence conflict" description="In Ref. 1; AAF21804." evidence="2" ref="1">
    <original>N</original>
    <variation>D</variation>
    <location>
        <position position="83"/>
    </location>
</feature>
<feature type="sequence conflict" description="In Ref. 1; AAF21804." evidence="2" ref="1">
    <original>I</original>
    <variation>T</variation>
    <location>
        <position position="93"/>
    </location>
</feature>
<feature type="sequence conflict" description="In Ref. 1; AAF21804." evidence="2" ref="1">
    <original>N</original>
    <variation>D</variation>
    <location>
        <position position="172"/>
    </location>
</feature>
<feature type="sequence conflict" description="In Ref. 1; AAF21804." evidence="2" ref="1">
    <original>N</original>
    <variation>S</variation>
    <location>
        <position position="210"/>
    </location>
</feature>
<keyword id="KW-0028">Amino-acid biosynthesis</keyword>
<keyword id="KW-0055">Arginine biosynthesis</keyword>
<keyword id="KW-0067">ATP-binding</keyword>
<keyword id="KW-0963">Cytoplasm</keyword>
<keyword id="KW-0418">Kinase</keyword>
<keyword id="KW-0547">Nucleotide-binding</keyword>
<keyword id="KW-1185">Reference proteome</keyword>
<keyword id="KW-0808">Transferase</keyword>